<dbReference type="EMBL" id="CP000712">
    <property type="protein sequence ID" value="ABQ80382.1"/>
    <property type="molecule type" value="Genomic_DNA"/>
</dbReference>
<dbReference type="SMR" id="A5W8C2"/>
<dbReference type="KEGG" id="ppf:Pput_4258"/>
<dbReference type="eggNOG" id="COG0806">
    <property type="taxonomic scope" value="Bacteria"/>
</dbReference>
<dbReference type="HOGENOM" id="CLU_077636_1_0_6"/>
<dbReference type="GO" id="GO:0005737">
    <property type="term" value="C:cytoplasm"/>
    <property type="evidence" value="ECO:0007669"/>
    <property type="project" value="UniProtKB-SubCell"/>
</dbReference>
<dbReference type="GO" id="GO:0005840">
    <property type="term" value="C:ribosome"/>
    <property type="evidence" value="ECO:0007669"/>
    <property type="project" value="InterPro"/>
</dbReference>
<dbReference type="GO" id="GO:0043022">
    <property type="term" value="F:ribosome binding"/>
    <property type="evidence" value="ECO:0007669"/>
    <property type="project" value="InterPro"/>
</dbReference>
<dbReference type="GO" id="GO:0042274">
    <property type="term" value="P:ribosomal small subunit biogenesis"/>
    <property type="evidence" value="ECO:0007669"/>
    <property type="project" value="UniProtKB-UniRule"/>
</dbReference>
<dbReference type="GO" id="GO:0006364">
    <property type="term" value="P:rRNA processing"/>
    <property type="evidence" value="ECO:0007669"/>
    <property type="project" value="UniProtKB-UniRule"/>
</dbReference>
<dbReference type="Gene3D" id="2.30.30.240">
    <property type="entry name" value="PRC-barrel domain"/>
    <property type="match status" value="1"/>
</dbReference>
<dbReference type="Gene3D" id="2.40.30.60">
    <property type="entry name" value="RimM"/>
    <property type="match status" value="1"/>
</dbReference>
<dbReference type="HAMAP" id="MF_00014">
    <property type="entry name" value="Ribosome_mat_RimM"/>
    <property type="match status" value="1"/>
</dbReference>
<dbReference type="InterPro" id="IPR011033">
    <property type="entry name" value="PRC_barrel-like_sf"/>
</dbReference>
<dbReference type="InterPro" id="IPR056792">
    <property type="entry name" value="PRC_RimM"/>
</dbReference>
<dbReference type="InterPro" id="IPR011961">
    <property type="entry name" value="RimM"/>
</dbReference>
<dbReference type="InterPro" id="IPR002676">
    <property type="entry name" value="RimM_N"/>
</dbReference>
<dbReference type="InterPro" id="IPR036976">
    <property type="entry name" value="RimM_N_sf"/>
</dbReference>
<dbReference type="InterPro" id="IPR009000">
    <property type="entry name" value="Transl_B-barrel_sf"/>
</dbReference>
<dbReference type="NCBIfam" id="TIGR02273">
    <property type="entry name" value="16S_RimM"/>
    <property type="match status" value="1"/>
</dbReference>
<dbReference type="PANTHER" id="PTHR33692">
    <property type="entry name" value="RIBOSOME MATURATION FACTOR RIMM"/>
    <property type="match status" value="1"/>
</dbReference>
<dbReference type="PANTHER" id="PTHR33692:SF1">
    <property type="entry name" value="RIBOSOME MATURATION FACTOR RIMM"/>
    <property type="match status" value="1"/>
</dbReference>
<dbReference type="Pfam" id="PF24986">
    <property type="entry name" value="PRC_RimM"/>
    <property type="match status" value="1"/>
</dbReference>
<dbReference type="Pfam" id="PF01782">
    <property type="entry name" value="RimM"/>
    <property type="match status" value="1"/>
</dbReference>
<dbReference type="SUPFAM" id="SSF50346">
    <property type="entry name" value="PRC-barrel domain"/>
    <property type="match status" value="1"/>
</dbReference>
<dbReference type="SUPFAM" id="SSF50447">
    <property type="entry name" value="Translation proteins"/>
    <property type="match status" value="1"/>
</dbReference>
<sequence length="178" mass="20082">MNATPEKADDLIVVGKIFSVHGVRGEVKVYSFTDPIENLLDYPRWTLRHEGKVKQVELVSGRGSQKGLVVKLKGLDDRDEARLLSGYEICIPRSLLPNLAADEYYWYQLVGLKVINQDEQLFGKVDHMLETGANDVMVVKPCAGSLDDRERLLPYTEQCVLAIDLEAGVMRVEWDADF</sequence>
<keyword id="KW-0143">Chaperone</keyword>
<keyword id="KW-0963">Cytoplasm</keyword>
<keyword id="KW-0690">Ribosome biogenesis</keyword>
<keyword id="KW-0698">rRNA processing</keyword>
<feature type="chain" id="PRO_1000001219" description="Ribosome maturation factor RimM">
    <location>
        <begin position="1"/>
        <end position="178"/>
    </location>
</feature>
<feature type="domain" description="PRC barrel" evidence="1">
    <location>
        <begin position="101"/>
        <end position="178"/>
    </location>
</feature>
<organism>
    <name type="scientific">Pseudomonas putida (strain ATCC 700007 / DSM 6899 / JCM 31910 / BCRC 17059 / LMG 24140 / F1)</name>
    <dbReference type="NCBI Taxonomy" id="351746"/>
    <lineage>
        <taxon>Bacteria</taxon>
        <taxon>Pseudomonadati</taxon>
        <taxon>Pseudomonadota</taxon>
        <taxon>Gammaproteobacteria</taxon>
        <taxon>Pseudomonadales</taxon>
        <taxon>Pseudomonadaceae</taxon>
        <taxon>Pseudomonas</taxon>
    </lineage>
</organism>
<protein>
    <recommendedName>
        <fullName evidence="1">Ribosome maturation factor RimM</fullName>
    </recommendedName>
</protein>
<name>RIMM_PSEP1</name>
<comment type="function">
    <text evidence="1">An accessory protein needed during the final step in the assembly of 30S ribosomal subunit, possibly for assembly of the head region. Essential for efficient processing of 16S rRNA. May be needed both before and after RbfA during the maturation of 16S rRNA. It has affinity for free ribosomal 30S subunits but not for 70S ribosomes.</text>
</comment>
<comment type="subunit">
    <text evidence="1">Binds ribosomal protein uS19.</text>
</comment>
<comment type="subcellular location">
    <subcellularLocation>
        <location evidence="1">Cytoplasm</location>
    </subcellularLocation>
</comment>
<comment type="domain">
    <text evidence="1">The PRC barrel domain binds ribosomal protein uS19.</text>
</comment>
<comment type="similarity">
    <text evidence="1">Belongs to the RimM family.</text>
</comment>
<proteinExistence type="inferred from homology"/>
<evidence type="ECO:0000255" key="1">
    <source>
        <dbReference type="HAMAP-Rule" id="MF_00014"/>
    </source>
</evidence>
<gene>
    <name evidence="1" type="primary">rimM</name>
    <name type="ordered locus">Pput_4258</name>
</gene>
<reference key="1">
    <citation type="submission" date="2007-05" db="EMBL/GenBank/DDBJ databases">
        <title>Complete sequence of Pseudomonas putida F1.</title>
        <authorList>
            <consortium name="US DOE Joint Genome Institute"/>
            <person name="Copeland A."/>
            <person name="Lucas S."/>
            <person name="Lapidus A."/>
            <person name="Barry K."/>
            <person name="Detter J.C."/>
            <person name="Glavina del Rio T."/>
            <person name="Hammon N."/>
            <person name="Israni S."/>
            <person name="Dalin E."/>
            <person name="Tice H."/>
            <person name="Pitluck S."/>
            <person name="Chain P."/>
            <person name="Malfatti S."/>
            <person name="Shin M."/>
            <person name="Vergez L."/>
            <person name="Schmutz J."/>
            <person name="Larimer F."/>
            <person name="Land M."/>
            <person name="Hauser L."/>
            <person name="Kyrpides N."/>
            <person name="Lykidis A."/>
            <person name="Parales R."/>
            <person name="Richardson P."/>
        </authorList>
    </citation>
    <scope>NUCLEOTIDE SEQUENCE [LARGE SCALE GENOMIC DNA]</scope>
    <source>
        <strain>ATCC 700007 / DSM 6899 / JCM 31910 / BCRC 17059 / LMG 24140 / F1</strain>
    </source>
</reference>
<accession>A5W8C2</accession>